<reference key="1">
    <citation type="journal article" date="2007" name="BMC Genomics">
        <title>Rapid evolutionary change of common bean (Phaseolus vulgaris L) plastome, and the genomic diversification of legume chloroplasts.</title>
        <authorList>
            <person name="Guo X."/>
            <person name="Castillo-Ramirez S."/>
            <person name="Gonzalez V."/>
            <person name="Bustos P."/>
            <person name="Fernandez-Vazquez J.L."/>
            <person name="Santamaria R.I."/>
            <person name="Arellano J."/>
            <person name="Cevallos M.A."/>
            <person name="Davila G."/>
        </authorList>
    </citation>
    <scope>NUCLEOTIDE SEQUENCE [LARGE SCALE GENOMIC DNA]</scope>
    <source>
        <strain>cv. Negro Jamapa</strain>
    </source>
</reference>
<reference key="2">
    <citation type="submission" date="2007-10" db="EMBL/GenBank/DDBJ databases">
        <title>Complete nucleotide sequence of the plastid genome of the common bean, Phaseolus vulgaris.</title>
        <authorList>
            <person name="Moore M.J."/>
            <person name="Triplett E.W."/>
            <person name="Broughton W.J."/>
            <person name="Soltis P.S."/>
            <person name="Soltis D.E."/>
        </authorList>
    </citation>
    <scope>NUCLEOTIDE SEQUENCE [LARGE SCALE GENOMIC DNA]</scope>
</reference>
<accession>A4GGD3</accession>
<feature type="chain" id="PRO_0000362211" description="Protein PsbN">
    <location>
        <begin position="1"/>
        <end position="43"/>
    </location>
</feature>
<feature type="transmembrane region" description="Helical" evidence="1">
    <location>
        <begin position="5"/>
        <end position="27"/>
    </location>
</feature>
<protein>
    <recommendedName>
        <fullName evidence="1">Protein PsbN</fullName>
    </recommendedName>
</protein>
<evidence type="ECO:0000255" key="1">
    <source>
        <dbReference type="HAMAP-Rule" id="MF_00293"/>
    </source>
</evidence>
<dbReference type="EMBL" id="DQ886273">
    <property type="protein sequence ID" value="ABH88113.1"/>
    <property type="molecule type" value="Genomic_DNA"/>
</dbReference>
<dbReference type="EMBL" id="EU196765">
    <property type="protein sequence ID" value="ABW22756.1"/>
    <property type="molecule type" value="Genomic_DNA"/>
</dbReference>
<dbReference type="RefSeq" id="YP_001122834.1">
    <property type="nucleotide sequence ID" value="NC_009259.1"/>
</dbReference>
<dbReference type="SMR" id="A4GGD3"/>
<dbReference type="GeneID" id="4961801"/>
<dbReference type="KEGG" id="pvu:4961801"/>
<dbReference type="GO" id="GO:0009535">
    <property type="term" value="C:chloroplast thylakoid membrane"/>
    <property type="evidence" value="ECO:0007669"/>
    <property type="project" value="UniProtKB-SubCell"/>
</dbReference>
<dbReference type="GO" id="GO:0015979">
    <property type="term" value="P:photosynthesis"/>
    <property type="evidence" value="ECO:0007669"/>
    <property type="project" value="InterPro"/>
</dbReference>
<dbReference type="HAMAP" id="MF_00293">
    <property type="entry name" value="PSII_PsbN"/>
    <property type="match status" value="1"/>
</dbReference>
<dbReference type="InterPro" id="IPR003398">
    <property type="entry name" value="PSII_PsbN"/>
</dbReference>
<dbReference type="PANTHER" id="PTHR35326">
    <property type="entry name" value="PROTEIN PSBN"/>
    <property type="match status" value="1"/>
</dbReference>
<dbReference type="PANTHER" id="PTHR35326:SF3">
    <property type="entry name" value="PROTEIN PSBN"/>
    <property type="match status" value="1"/>
</dbReference>
<dbReference type="Pfam" id="PF02468">
    <property type="entry name" value="PsbN"/>
    <property type="match status" value="1"/>
</dbReference>
<name>PSBN_PHAVU</name>
<sequence>METATLIAISISGLLVSFTGYALYTAFGQPSQQLRDPFEEHGD</sequence>
<comment type="function">
    <text evidence="1">May play a role in photosystem I and II biogenesis.</text>
</comment>
<comment type="subcellular location">
    <subcellularLocation>
        <location evidence="1">Plastid</location>
        <location evidence="1">Chloroplast thylakoid membrane</location>
        <topology evidence="1">Single-pass membrane protein</topology>
    </subcellularLocation>
</comment>
<comment type="similarity">
    <text evidence="1">Belongs to the PsbN family.</text>
</comment>
<comment type="caution">
    <text evidence="1">Originally thought to be a component of PSII; based on experiments in Synechocystis, N.tabacum and barley, and its absence from PSII in T.elongatus and T.vulcanus, this is probably not true.</text>
</comment>
<gene>
    <name evidence="1" type="primary">psbN</name>
</gene>
<proteinExistence type="inferred from homology"/>
<organism>
    <name type="scientific">Phaseolus vulgaris</name>
    <name type="common">Kidney bean</name>
    <name type="synonym">French bean</name>
    <dbReference type="NCBI Taxonomy" id="3885"/>
    <lineage>
        <taxon>Eukaryota</taxon>
        <taxon>Viridiplantae</taxon>
        <taxon>Streptophyta</taxon>
        <taxon>Embryophyta</taxon>
        <taxon>Tracheophyta</taxon>
        <taxon>Spermatophyta</taxon>
        <taxon>Magnoliopsida</taxon>
        <taxon>eudicotyledons</taxon>
        <taxon>Gunneridae</taxon>
        <taxon>Pentapetalae</taxon>
        <taxon>rosids</taxon>
        <taxon>fabids</taxon>
        <taxon>Fabales</taxon>
        <taxon>Fabaceae</taxon>
        <taxon>Papilionoideae</taxon>
        <taxon>50 kb inversion clade</taxon>
        <taxon>NPAAA clade</taxon>
        <taxon>indigoferoid/millettioid clade</taxon>
        <taxon>Phaseoleae</taxon>
        <taxon>Phaseolus</taxon>
    </lineage>
</organism>
<geneLocation type="chloroplast"/>
<keyword id="KW-0150">Chloroplast</keyword>
<keyword id="KW-0472">Membrane</keyword>
<keyword id="KW-0934">Plastid</keyword>
<keyword id="KW-0793">Thylakoid</keyword>
<keyword id="KW-0812">Transmembrane</keyword>
<keyword id="KW-1133">Transmembrane helix</keyword>